<protein>
    <recommendedName>
        <fullName evidence="1">Protein translocase subunit SecA 2</fullName>
        <ecNumber evidence="1">7.4.2.8</ecNumber>
    </recommendedName>
</protein>
<organism>
    <name type="scientific">Rhodopirellula baltica (strain DSM 10527 / NCIMB 13988 / SH1)</name>
    <dbReference type="NCBI Taxonomy" id="243090"/>
    <lineage>
        <taxon>Bacteria</taxon>
        <taxon>Pseudomonadati</taxon>
        <taxon>Planctomycetota</taxon>
        <taxon>Planctomycetia</taxon>
        <taxon>Pirellulales</taxon>
        <taxon>Pirellulaceae</taxon>
        <taxon>Rhodopirellula</taxon>
    </lineage>
</organism>
<accession>Q7UWI5</accession>
<dbReference type="EC" id="7.4.2.8" evidence="1"/>
<dbReference type="EMBL" id="BX294136">
    <property type="protein sequence ID" value="CAD72378.1"/>
    <property type="status" value="ALT_INIT"/>
    <property type="molecule type" value="Genomic_DNA"/>
</dbReference>
<dbReference type="RefSeq" id="NP_864696.1">
    <property type="nucleotide sequence ID" value="NC_005027.1"/>
</dbReference>
<dbReference type="SMR" id="Q7UWI5"/>
<dbReference type="STRING" id="243090.RB2013"/>
<dbReference type="EnsemblBacteria" id="CAD72378">
    <property type="protein sequence ID" value="CAD72378"/>
    <property type="gene ID" value="RB2013"/>
</dbReference>
<dbReference type="KEGG" id="rba:RB2013"/>
<dbReference type="PATRIC" id="fig|243090.15.peg.918"/>
<dbReference type="eggNOG" id="COG0653">
    <property type="taxonomic scope" value="Bacteria"/>
</dbReference>
<dbReference type="HOGENOM" id="CLU_005314_3_2_0"/>
<dbReference type="InParanoid" id="Q7UWI5"/>
<dbReference type="OrthoDB" id="9805579at2"/>
<dbReference type="Proteomes" id="UP000001025">
    <property type="component" value="Chromosome"/>
</dbReference>
<dbReference type="GO" id="GO:0031522">
    <property type="term" value="C:cell envelope Sec protein transport complex"/>
    <property type="evidence" value="ECO:0000318"/>
    <property type="project" value="GO_Central"/>
</dbReference>
<dbReference type="GO" id="GO:0005737">
    <property type="term" value="C:cytoplasm"/>
    <property type="evidence" value="ECO:0007669"/>
    <property type="project" value="UniProtKB-SubCell"/>
</dbReference>
<dbReference type="GO" id="GO:0005886">
    <property type="term" value="C:plasma membrane"/>
    <property type="evidence" value="ECO:0000318"/>
    <property type="project" value="GO_Central"/>
</dbReference>
<dbReference type="GO" id="GO:0005524">
    <property type="term" value="F:ATP binding"/>
    <property type="evidence" value="ECO:0000318"/>
    <property type="project" value="GO_Central"/>
</dbReference>
<dbReference type="GO" id="GO:0008564">
    <property type="term" value="F:protein-exporting ATPase activity"/>
    <property type="evidence" value="ECO:0007669"/>
    <property type="project" value="UniProtKB-EC"/>
</dbReference>
<dbReference type="GO" id="GO:0065002">
    <property type="term" value="P:intracellular protein transmembrane transport"/>
    <property type="evidence" value="ECO:0007669"/>
    <property type="project" value="UniProtKB-UniRule"/>
</dbReference>
<dbReference type="GO" id="GO:0017038">
    <property type="term" value="P:protein import"/>
    <property type="evidence" value="ECO:0007669"/>
    <property type="project" value="InterPro"/>
</dbReference>
<dbReference type="GO" id="GO:0006605">
    <property type="term" value="P:protein targeting"/>
    <property type="evidence" value="ECO:0007669"/>
    <property type="project" value="UniProtKB-UniRule"/>
</dbReference>
<dbReference type="GO" id="GO:0043952">
    <property type="term" value="P:protein transport by the Sec complex"/>
    <property type="evidence" value="ECO:0000318"/>
    <property type="project" value="GO_Central"/>
</dbReference>
<dbReference type="CDD" id="cd17928">
    <property type="entry name" value="DEXDc_SecA"/>
    <property type="match status" value="1"/>
</dbReference>
<dbReference type="CDD" id="cd18803">
    <property type="entry name" value="SF2_C_secA"/>
    <property type="match status" value="1"/>
</dbReference>
<dbReference type="FunFam" id="3.40.50.300:FF:000429">
    <property type="entry name" value="Preprotein translocase subunit SecA"/>
    <property type="match status" value="1"/>
</dbReference>
<dbReference type="Gene3D" id="3.40.50.300">
    <property type="entry name" value="P-loop containing nucleotide triphosphate hydrolases"/>
    <property type="match status" value="2"/>
</dbReference>
<dbReference type="Gene3D" id="3.90.1440.10">
    <property type="entry name" value="SecA, preprotein cross-linking domain"/>
    <property type="match status" value="1"/>
</dbReference>
<dbReference type="HAMAP" id="MF_01382">
    <property type="entry name" value="SecA"/>
    <property type="match status" value="1"/>
</dbReference>
<dbReference type="InterPro" id="IPR014001">
    <property type="entry name" value="Helicase_ATP-bd"/>
</dbReference>
<dbReference type="InterPro" id="IPR001650">
    <property type="entry name" value="Helicase_C-like"/>
</dbReference>
<dbReference type="InterPro" id="IPR027417">
    <property type="entry name" value="P-loop_NTPase"/>
</dbReference>
<dbReference type="InterPro" id="IPR000185">
    <property type="entry name" value="SecA"/>
</dbReference>
<dbReference type="InterPro" id="IPR020937">
    <property type="entry name" value="SecA_CS"/>
</dbReference>
<dbReference type="InterPro" id="IPR011115">
    <property type="entry name" value="SecA_DEAD"/>
</dbReference>
<dbReference type="InterPro" id="IPR014018">
    <property type="entry name" value="SecA_motor_DEAD"/>
</dbReference>
<dbReference type="InterPro" id="IPR011130">
    <property type="entry name" value="SecA_preprotein_X-link_dom"/>
</dbReference>
<dbReference type="InterPro" id="IPR044722">
    <property type="entry name" value="SecA_SF2_C"/>
</dbReference>
<dbReference type="InterPro" id="IPR036670">
    <property type="entry name" value="SecA_X-link_sf"/>
</dbReference>
<dbReference type="PANTHER" id="PTHR30612:SF0">
    <property type="entry name" value="CHLOROPLAST PROTEIN-TRANSPORTING ATPASE"/>
    <property type="match status" value="1"/>
</dbReference>
<dbReference type="PANTHER" id="PTHR30612">
    <property type="entry name" value="SECA INNER MEMBRANE COMPONENT OF SEC PROTEIN SECRETION SYSTEM"/>
    <property type="match status" value="1"/>
</dbReference>
<dbReference type="Pfam" id="PF21090">
    <property type="entry name" value="P-loop_SecA"/>
    <property type="match status" value="1"/>
</dbReference>
<dbReference type="Pfam" id="PF07517">
    <property type="entry name" value="SecA_DEAD"/>
    <property type="match status" value="1"/>
</dbReference>
<dbReference type="Pfam" id="PF01043">
    <property type="entry name" value="SecA_PP_bind"/>
    <property type="match status" value="1"/>
</dbReference>
<dbReference type="PRINTS" id="PR00906">
    <property type="entry name" value="SECA"/>
</dbReference>
<dbReference type="SMART" id="SM00957">
    <property type="entry name" value="SecA_DEAD"/>
    <property type="match status" value="1"/>
</dbReference>
<dbReference type="SMART" id="SM00958">
    <property type="entry name" value="SecA_PP_bind"/>
    <property type="match status" value="1"/>
</dbReference>
<dbReference type="SUPFAM" id="SSF52540">
    <property type="entry name" value="P-loop containing nucleoside triphosphate hydrolases"/>
    <property type="match status" value="2"/>
</dbReference>
<dbReference type="SUPFAM" id="SSF81767">
    <property type="entry name" value="Pre-protein crosslinking domain of SecA"/>
    <property type="match status" value="1"/>
</dbReference>
<dbReference type="PROSITE" id="PS01312">
    <property type="entry name" value="SECA"/>
    <property type="match status" value="1"/>
</dbReference>
<dbReference type="PROSITE" id="PS51196">
    <property type="entry name" value="SECA_MOTOR_DEAD"/>
    <property type="match status" value="1"/>
</dbReference>
<evidence type="ECO:0000255" key="1">
    <source>
        <dbReference type="HAMAP-Rule" id="MF_01382"/>
    </source>
</evidence>
<evidence type="ECO:0000305" key="2"/>
<proteinExistence type="inferred from homology"/>
<comment type="function">
    <text evidence="1">Part of the Sec protein translocase complex. Interacts with the SecYEG preprotein conducting channel. Has a central role in coupling the hydrolysis of ATP to the transfer of proteins into and across the cell membrane, serving as an ATP-driven molecular motor driving the stepwise translocation of polypeptide chains across the membrane.</text>
</comment>
<comment type="catalytic activity">
    <reaction evidence="1">
        <text>ATP + H2O + cellular proteinSide 1 = ADP + phosphate + cellular proteinSide 2.</text>
        <dbReference type="EC" id="7.4.2.8"/>
    </reaction>
</comment>
<comment type="subunit">
    <text evidence="1">Monomer and homodimer. Part of the essential Sec protein translocation apparatus which comprises SecA, SecYEG and auxiliary proteins SecDF. Other proteins may also be involved.</text>
</comment>
<comment type="subcellular location">
    <subcellularLocation>
        <location evidence="1">Cell inner membrane</location>
        <topology evidence="1">Peripheral membrane protein</topology>
        <orientation evidence="1">Cytoplasmic side</orientation>
    </subcellularLocation>
    <subcellularLocation>
        <location evidence="1">Cytoplasm</location>
    </subcellularLocation>
    <text evidence="1">Distribution is 50-50.</text>
</comment>
<comment type="similarity">
    <text evidence="1">Belongs to the SecA family.</text>
</comment>
<comment type="sequence caution" evidence="2">
    <conflict type="erroneous initiation">
        <sequence resource="EMBL-CDS" id="CAD72378"/>
    </conflict>
    <text>Extended N-terminus.</text>
</comment>
<sequence length="657" mass="74268">MRRSSDPSANKKKWTKASNWRPRMVRWQRQLARVNALESTLQAEDDQTIRKRSLALRYRAMAGEKLSELLPEAYALCREAGRRSLSMRHYDVQILGGIALFEGHITEMQTGEGKTLTATLPLYLHSLVGKGAHLATVNDYLAKRDAEWMMPLFEMLGVSVGIIQTEDDQGGRRKSYGAAITYGTAKEFGFDFLRDRLLLRAQNRMQTEMLGSGDGGFSNSGDQVVMRGMHFCLVDEADSILIDEARTPLIIGSIEDTVRDQIIETYKWAAENAPLFELDEHFEIDDETKRYELTARGRSKVRALPKSDLVRTMGLVDMYEYIERSIKTHREFLLDRQYVIRPSEKDPNVDEIVIVDEFTGRLAEGRKWRDGIHQSIEAKEGVEISVPTGQAARITVQDLFLRYPHLAGMTGTAATSAGELRKIYRTPVVRVPTNRPPQRIQLPSRVFGTLTSKFEAIAKEVEEIHATGRPVLVGTRSIDKSVLLSKLLDDLGIEHEVLNANNVEREAEIVAEAGGRGKVTVATNMAGRGTDIKLSNDVEQIGGMHVICTELHDAARIDRQLIGRCGRQGDRGSYRQYLSLDDDILKGGYGAIKYEKLKKRGEATSGSVDRLAAMFHKAQRKVERRHFRDRMVLMHHEKERKKMQREIGQDPYLDTPD</sequence>
<keyword id="KW-0067">ATP-binding</keyword>
<keyword id="KW-0997">Cell inner membrane</keyword>
<keyword id="KW-1003">Cell membrane</keyword>
<keyword id="KW-0963">Cytoplasm</keyword>
<keyword id="KW-0472">Membrane</keyword>
<keyword id="KW-0547">Nucleotide-binding</keyword>
<keyword id="KW-0653">Protein transport</keyword>
<keyword id="KW-1185">Reference proteome</keyword>
<keyword id="KW-1278">Translocase</keyword>
<keyword id="KW-0811">Translocation</keyword>
<keyword id="KW-0813">Transport</keyword>
<name>SECA2_RHOBA</name>
<reference key="1">
    <citation type="journal article" date="2003" name="Proc. Natl. Acad. Sci. U.S.A.">
        <title>Complete genome sequence of the marine planctomycete Pirellula sp. strain 1.</title>
        <authorList>
            <person name="Gloeckner F.O."/>
            <person name="Kube M."/>
            <person name="Bauer M."/>
            <person name="Teeling H."/>
            <person name="Lombardot T."/>
            <person name="Ludwig W."/>
            <person name="Gade D."/>
            <person name="Beck A."/>
            <person name="Borzym K."/>
            <person name="Heitmann K."/>
            <person name="Rabus R."/>
            <person name="Schlesner H."/>
            <person name="Amann R."/>
            <person name="Reinhardt R."/>
        </authorList>
    </citation>
    <scope>NUCLEOTIDE SEQUENCE [LARGE SCALE GENOMIC DNA]</scope>
    <source>
        <strain>DSM 10527 / NCIMB 13988 / SH1</strain>
    </source>
</reference>
<feature type="chain" id="PRO_0000318417" description="Protein translocase subunit SecA 2">
    <location>
        <begin position="1"/>
        <end position="657"/>
    </location>
</feature>
<feature type="binding site" evidence="1">
    <location>
        <position position="93"/>
    </location>
    <ligand>
        <name>ATP</name>
        <dbReference type="ChEBI" id="CHEBI:30616"/>
    </ligand>
</feature>
<feature type="binding site" evidence="1">
    <location>
        <begin position="111"/>
        <end position="115"/>
    </location>
    <ligand>
        <name>ATP</name>
        <dbReference type="ChEBI" id="CHEBI:30616"/>
    </ligand>
</feature>
<feature type="binding site" evidence="1">
    <location>
        <position position="531"/>
    </location>
    <ligand>
        <name>ATP</name>
        <dbReference type="ChEBI" id="CHEBI:30616"/>
    </ligand>
</feature>
<gene>
    <name evidence="1" type="primary">secA2</name>
    <name type="ordered locus">RB2013</name>
</gene>